<protein>
    <recommendedName>
        <fullName>Lithostathine</fullName>
    </recommendedName>
    <component>
        <recommendedName>
            <fullName>Lithostathine A chain</fullName>
        </recommendedName>
    </component>
</protein>
<keyword id="KW-1015">Disulfide bond</keyword>
<keyword id="KW-0430">Lectin</keyword>
<keyword id="KW-1185">Reference proteome</keyword>
<keyword id="KW-0964">Secreted</keyword>
<keyword id="KW-0732">Signal</keyword>
<reference key="1">
    <citation type="journal article" date="1996" name="Mamm. Genome">
        <title>Evaluation and characterization of a porcine small intestine cDNA library: analysis of 839 clones.</title>
        <authorList>
            <person name="Winteroe A.K."/>
            <person name="Fredholm M."/>
            <person name="Davies W."/>
        </authorList>
    </citation>
    <scope>NUCLEOTIDE SEQUENCE [LARGE SCALE MRNA]</scope>
    <source>
        <tissue>Small intestine</tissue>
    </source>
</reference>
<proteinExistence type="evidence at transcript level"/>
<name>LITH_PIG</name>
<feature type="signal peptide" evidence="2">
    <location>
        <begin position="1"/>
        <end position="26"/>
    </location>
</feature>
<feature type="propeptide" id="PRO_0000017421" evidence="2">
    <location>
        <begin position="27"/>
        <end position="37"/>
    </location>
</feature>
<feature type="chain" id="PRO_0000017422" description="Lithostathine">
    <location>
        <begin position="38"/>
        <end position="122" status="greater than"/>
    </location>
</feature>
<feature type="chain" id="PRO_0000017423" description="Lithostathine A chain">
    <location>
        <begin position="38"/>
        <end position="122" status="greater than"/>
    </location>
</feature>
<feature type="domain" description="C-type lectin" evidence="3">
    <location>
        <begin position="38"/>
        <end position="122" status="greater than"/>
    </location>
</feature>
<feature type="disulfide bond" evidence="3">
    <location>
        <begin position="40"/>
        <end position="51"/>
    </location>
</feature>
<feature type="non-terminal residue">
    <location>
        <position position="122"/>
    </location>
</feature>
<comment type="function">
    <text evidence="1">Might act as an inhibitor of spontaneous calcium carbonate precipitation.</text>
</comment>
<comment type="subunit">
    <text evidence="1">Cleaved to give an A chain and a B chain joined by a disulfide bond.</text>
</comment>
<comment type="subcellular location">
    <subcellularLocation>
        <location evidence="1">Secreted</location>
    </subcellularLocation>
</comment>
<comment type="tissue specificity">
    <text>In pancreatic acinar cells.</text>
</comment>
<sequence>MLPSMSLPSLXWMLLSCLMLLSQVQGEDSPADTPSARISCPKGSMAYASYCYALFITPKTWMGADMACQKRPSGHLVSVLSGAEASFVSSLIKNNLNALSDVWIGLHDPTEGLEPNAGGWEW</sequence>
<dbReference type="EMBL" id="F14502">
    <property type="protein sequence ID" value="CAA23093.1"/>
    <property type="molecule type" value="mRNA"/>
</dbReference>
<dbReference type="STRING" id="9823.ENSSSCP00000030478"/>
<dbReference type="PaxDb" id="9823-ENSSSCP00000030478"/>
<dbReference type="PeptideAtlas" id="Q29191"/>
<dbReference type="eggNOG" id="KOG4297">
    <property type="taxonomic scope" value="Eukaryota"/>
</dbReference>
<dbReference type="InParanoid" id="Q29191"/>
<dbReference type="Proteomes" id="UP000008227">
    <property type="component" value="Unplaced"/>
</dbReference>
<dbReference type="Proteomes" id="UP000314985">
    <property type="component" value="Unplaced"/>
</dbReference>
<dbReference type="Proteomes" id="UP000694570">
    <property type="component" value="Unplaced"/>
</dbReference>
<dbReference type="Proteomes" id="UP000694571">
    <property type="component" value="Unplaced"/>
</dbReference>
<dbReference type="Proteomes" id="UP000694720">
    <property type="component" value="Unplaced"/>
</dbReference>
<dbReference type="Proteomes" id="UP000694722">
    <property type="component" value="Unplaced"/>
</dbReference>
<dbReference type="Proteomes" id="UP000694723">
    <property type="component" value="Unplaced"/>
</dbReference>
<dbReference type="Proteomes" id="UP000694724">
    <property type="component" value="Unplaced"/>
</dbReference>
<dbReference type="Proteomes" id="UP000694725">
    <property type="component" value="Unplaced"/>
</dbReference>
<dbReference type="Proteomes" id="UP000694726">
    <property type="component" value="Unplaced"/>
</dbReference>
<dbReference type="Proteomes" id="UP000694727">
    <property type="component" value="Unplaced"/>
</dbReference>
<dbReference type="Proteomes" id="UP000694728">
    <property type="component" value="Unplaced"/>
</dbReference>
<dbReference type="GO" id="GO:0005576">
    <property type="term" value="C:extracellular region"/>
    <property type="evidence" value="ECO:0007669"/>
    <property type="project" value="UniProtKB-SubCell"/>
</dbReference>
<dbReference type="GO" id="GO:0030246">
    <property type="term" value="F:carbohydrate binding"/>
    <property type="evidence" value="ECO:0007669"/>
    <property type="project" value="UniProtKB-KW"/>
</dbReference>
<dbReference type="Gene3D" id="3.10.100.10">
    <property type="entry name" value="Mannose-Binding Protein A, subunit A"/>
    <property type="match status" value="1"/>
</dbReference>
<dbReference type="InterPro" id="IPR001304">
    <property type="entry name" value="C-type_lectin-like"/>
</dbReference>
<dbReference type="InterPro" id="IPR016186">
    <property type="entry name" value="C-type_lectin-like/link_sf"/>
</dbReference>
<dbReference type="InterPro" id="IPR050111">
    <property type="entry name" value="C-type_lectin/snaclec_domain"/>
</dbReference>
<dbReference type="InterPro" id="IPR016187">
    <property type="entry name" value="CTDL_fold"/>
</dbReference>
<dbReference type="PANTHER" id="PTHR22803">
    <property type="entry name" value="MANNOSE, PHOSPHOLIPASE, LECTIN RECEPTOR RELATED"/>
    <property type="match status" value="1"/>
</dbReference>
<dbReference type="Pfam" id="PF00059">
    <property type="entry name" value="Lectin_C"/>
    <property type="match status" value="1"/>
</dbReference>
<dbReference type="PRINTS" id="PR01504">
    <property type="entry name" value="PNCREATITSAP"/>
</dbReference>
<dbReference type="SUPFAM" id="SSF56436">
    <property type="entry name" value="C-type lectin-like"/>
    <property type="match status" value="1"/>
</dbReference>
<dbReference type="PROSITE" id="PS50041">
    <property type="entry name" value="C_TYPE_LECTIN_2"/>
    <property type="match status" value="1"/>
</dbReference>
<gene>
    <name type="primary">PTP</name>
</gene>
<evidence type="ECO:0000250" key="1"/>
<evidence type="ECO:0000255" key="2"/>
<evidence type="ECO:0000255" key="3">
    <source>
        <dbReference type="PROSITE-ProRule" id="PRU00040"/>
    </source>
</evidence>
<organism>
    <name type="scientific">Sus scrofa</name>
    <name type="common">Pig</name>
    <dbReference type="NCBI Taxonomy" id="9823"/>
    <lineage>
        <taxon>Eukaryota</taxon>
        <taxon>Metazoa</taxon>
        <taxon>Chordata</taxon>
        <taxon>Craniata</taxon>
        <taxon>Vertebrata</taxon>
        <taxon>Euteleostomi</taxon>
        <taxon>Mammalia</taxon>
        <taxon>Eutheria</taxon>
        <taxon>Laurasiatheria</taxon>
        <taxon>Artiodactyla</taxon>
        <taxon>Suina</taxon>
        <taxon>Suidae</taxon>
        <taxon>Sus</taxon>
    </lineage>
</organism>
<accession>Q29191</accession>